<feature type="chain" id="PRO_0000265700" description="Elongation factor 4">
    <location>
        <begin position="1"/>
        <end position="596"/>
    </location>
</feature>
<feature type="domain" description="tr-type G">
    <location>
        <begin position="2"/>
        <end position="184"/>
    </location>
</feature>
<feature type="binding site" evidence="1">
    <location>
        <begin position="14"/>
        <end position="19"/>
    </location>
    <ligand>
        <name>GTP</name>
        <dbReference type="ChEBI" id="CHEBI:37565"/>
    </ligand>
</feature>
<feature type="binding site" evidence="1">
    <location>
        <begin position="131"/>
        <end position="134"/>
    </location>
    <ligand>
        <name>GTP</name>
        <dbReference type="ChEBI" id="CHEBI:37565"/>
    </ligand>
</feature>
<gene>
    <name evidence="1" type="primary">lepA</name>
    <name type="ordered locus">Sden_2768</name>
</gene>
<accession>Q12KH9</accession>
<name>LEPA_SHEDO</name>
<sequence>MKHIRNFSIIAHIDHGKSTLSDRLIQVCGGLSDREMAAQVLDSMDLERERGITIKAQSVTLDYHAKDGNTYQLNFIDTPGHVDFSYEVSRSLAACEGALLVVDAGQGVEAQTLANCYTALEMNLDVVPVLNKIDLPQAEPERVALEIEDIVGIEAINAVRCSAKTGIGVEDVLEEIVAKIPPPVGDETAPLQALIIDSWFDAYLGVVSLVRIKHGVLKKGEKFKVMSTGQNYNADRVGIFTPKEKDKLELRAGEVGYVISGIKEIHGAPVGDTLTHAKHGADKPLPGFKKVKPQVYAGVFPISTDEYENFRDALNKLSLNDASLFFEPETSSALGFGFRIGYLGLLHMEIVQERLEREYNLDLITTAPTVVYEVVMTNGDIVYVDNPSDLPALNNIDEIHEPIVEANILVPKEYLGNVITLCIEKRGSQTNMVYHGNQVAVTYHLPMAEVVMDFFDRLKSTSRGYASLEYNFIRFDPADMVRLDILINGDRVDALAMIIHRSNIRHRGLALVEKMKELIPRQMFDIAIQAAVGSQIIARSTIKALRKDVTAKCYGGDVSRKKKLLNKQKEGKKRMKQVGNVEVPQEAFLAVLKLND</sequence>
<reference key="1">
    <citation type="submission" date="2006-03" db="EMBL/GenBank/DDBJ databases">
        <title>Complete sequence of Shewanella denitrificans OS217.</title>
        <authorList>
            <consortium name="US DOE Joint Genome Institute"/>
            <person name="Copeland A."/>
            <person name="Lucas S."/>
            <person name="Lapidus A."/>
            <person name="Barry K."/>
            <person name="Detter J.C."/>
            <person name="Glavina del Rio T."/>
            <person name="Hammon N."/>
            <person name="Israni S."/>
            <person name="Dalin E."/>
            <person name="Tice H."/>
            <person name="Pitluck S."/>
            <person name="Brettin T."/>
            <person name="Bruce D."/>
            <person name="Han C."/>
            <person name="Tapia R."/>
            <person name="Gilna P."/>
            <person name="Kiss H."/>
            <person name="Schmutz J."/>
            <person name="Larimer F."/>
            <person name="Land M."/>
            <person name="Hauser L."/>
            <person name="Kyrpides N."/>
            <person name="Lykidis A."/>
            <person name="Richardson P."/>
        </authorList>
    </citation>
    <scope>NUCLEOTIDE SEQUENCE [LARGE SCALE GENOMIC DNA]</scope>
    <source>
        <strain>OS217 / ATCC BAA-1090 / DSM 15013</strain>
    </source>
</reference>
<protein>
    <recommendedName>
        <fullName evidence="1">Elongation factor 4</fullName>
        <shortName evidence="1">EF-4</shortName>
        <ecNumber evidence="1">3.6.5.n1</ecNumber>
    </recommendedName>
    <alternativeName>
        <fullName evidence="1">Ribosomal back-translocase LepA</fullName>
    </alternativeName>
</protein>
<dbReference type="EC" id="3.6.5.n1" evidence="1"/>
<dbReference type="EMBL" id="CP000302">
    <property type="protein sequence ID" value="ABE56047.1"/>
    <property type="molecule type" value="Genomic_DNA"/>
</dbReference>
<dbReference type="RefSeq" id="WP_011497197.1">
    <property type="nucleotide sequence ID" value="NC_007954.1"/>
</dbReference>
<dbReference type="SMR" id="Q12KH9"/>
<dbReference type="STRING" id="318161.Sden_2768"/>
<dbReference type="KEGG" id="sdn:Sden_2768"/>
<dbReference type="eggNOG" id="COG0481">
    <property type="taxonomic scope" value="Bacteria"/>
</dbReference>
<dbReference type="HOGENOM" id="CLU_009995_3_3_6"/>
<dbReference type="OrthoDB" id="9804431at2"/>
<dbReference type="Proteomes" id="UP000001982">
    <property type="component" value="Chromosome"/>
</dbReference>
<dbReference type="GO" id="GO:0005886">
    <property type="term" value="C:plasma membrane"/>
    <property type="evidence" value="ECO:0007669"/>
    <property type="project" value="UniProtKB-SubCell"/>
</dbReference>
<dbReference type="GO" id="GO:0005525">
    <property type="term" value="F:GTP binding"/>
    <property type="evidence" value="ECO:0007669"/>
    <property type="project" value="UniProtKB-UniRule"/>
</dbReference>
<dbReference type="GO" id="GO:0003924">
    <property type="term" value="F:GTPase activity"/>
    <property type="evidence" value="ECO:0007669"/>
    <property type="project" value="UniProtKB-UniRule"/>
</dbReference>
<dbReference type="GO" id="GO:0097216">
    <property type="term" value="F:guanosine tetraphosphate binding"/>
    <property type="evidence" value="ECO:0007669"/>
    <property type="project" value="UniProtKB-ARBA"/>
</dbReference>
<dbReference type="GO" id="GO:0043022">
    <property type="term" value="F:ribosome binding"/>
    <property type="evidence" value="ECO:0007669"/>
    <property type="project" value="UniProtKB-UniRule"/>
</dbReference>
<dbReference type="GO" id="GO:0003746">
    <property type="term" value="F:translation elongation factor activity"/>
    <property type="evidence" value="ECO:0007669"/>
    <property type="project" value="UniProtKB-UniRule"/>
</dbReference>
<dbReference type="GO" id="GO:0045727">
    <property type="term" value="P:positive regulation of translation"/>
    <property type="evidence" value="ECO:0007669"/>
    <property type="project" value="UniProtKB-UniRule"/>
</dbReference>
<dbReference type="CDD" id="cd03699">
    <property type="entry name" value="EF4_II"/>
    <property type="match status" value="1"/>
</dbReference>
<dbReference type="CDD" id="cd16260">
    <property type="entry name" value="EF4_III"/>
    <property type="match status" value="1"/>
</dbReference>
<dbReference type="CDD" id="cd01890">
    <property type="entry name" value="LepA"/>
    <property type="match status" value="1"/>
</dbReference>
<dbReference type="CDD" id="cd03709">
    <property type="entry name" value="lepA_C"/>
    <property type="match status" value="1"/>
</dbReference>
<dbReference type="FunFam" id="3.40.50.300:FF:000078">
    <property type="entry name" value="Elongation factor 4"/>
    <property type="match status" value="1"/>
</dbReference>
<dbReference type="FunFam" id="2.40.30.10:FF:000015">
    <property type="entry name" value="Translation factor GUF1, mitochondrial"/>
    <property type="match status" value="1"/>
</dbReference>
<dbReference type="FunFam" id="3.30.70.240:FF:000007">
    <property type="entry name" value="Translation factor GUF1, mitochondrial"/>
    <property type="match status" value="1"/>
</dbReference>
<dbReference type="FunFam" id="3.30.70.2570:FF:000001">
    <property type="entry name" value="Translation factor GUF1, mitochondrial"/>
    <property type="match status" value="1"/>
</dbReference>
<dbReference type="FunFam" id="3.30.70.870:FF:000004">
    <property type="entry name" value="Translation factor GUF1, mitochondrial"/>
    <property type="match status" value="1"/>
</dbReference>
<dbReference type="Gene3D" id="3.30.70.240">
    <property type="match status" value="1"/>
</dbReference>
<dbReference type="Gene3D" id="3.30.70.2570">
    <property type="entry name" value="Elongation factor 4, C-terminal domain"/>
    <property type="match status" value="1"/>
</dbReference>
<dbReference type="Gene3D" id="3.30.70.870">
    <property type="entry name" value="Elongation Factor G (Translational Gtpase), domain 3"/>
    <property type="match status" value="1"/>
</dbReference>
<dbReference type="Gene3D" id="3.40.50.300">
    <property type="entry name" value="P-loop containing nucleotide triphosphate hydrolases"/>
    <property type="match status" value="1"/>
</dbReference>
<dbReference type="Gene3D" id="2.40.30.10">
    <property type="entry name" value="Translation factors"/>
    <property type="match status" value="1"/>
</dbReference>
<dbReference type="HAMAP" id="MF_00071">
    <property type="entry name" value="LepA"/>
    <property type="match status" value="1"/>
</dbReference>
<dbReference type="InterPro" id="IPR006297">
    <property type="entry name" value="EF-4"/>
</dbReference>
<dbReference type="InterPro" id="IPR035647">
    <property type="entry name" value="EFG_III/V"/>
</dbReference>
<dbReference type="InterPro" id="IPR000640">
    <property type="entry name" value="EFG_V-like"/>
</dbReference>
<dbReference type="InterPro" id="IPR004161">
    <property type="entry name" value="EFTu-like_2"/>
</dbReference>
<dbReference type="InterPro" id="IPR031157">
    <property type="entry name" value="G_TR_CS"/>
</dbReference>
<dbReference type="InterPro" id="IPR038363">
    <property type="entry name" value="LepA_C_sf"/>
</dbReference>
<dbReference type="InterPro" id="IPR013842">
    <property type="entry name" value="LepA_CTD"/>
</dbReference>
<dbReference type="InterPro" id="IPR035654">
    <property type="entry name" value="LepA_IV"/>
</dbReference>
<dbReference type="InterPro" id="IPR027417">
    <property type="entry name" value="P-loop_NTPase"/>
</dbReference>
<dbReference type="InterPro" id="IPR005225">
    <property type="entry name" value="Small_GTP-bd"/>
</dbReference>
<dbReference type="InterPro" id="IPR000795">
    <property type="entry name" value="T_Tr_GTP-bd_dom"/>
</dbReference>
<dbReference type="NCBIfam" id="TIGR01393">
    <property type="entry name" value="lepA"/>
    <property type="match status" value="1"/>
</dbReference>
<dbReference type="NCBIfam" id="TIGR00231">
    <property type="entry name" value="small_GTP"/>
    <property type="match status" value="1"/>
</dbReference>
<dbReference type="PANTHER" id="PTHR43512:SF4">
    <property type="entry name" value="TRANSLATION FACTOR GUF1 HOMOLOG, CHLOROPLASTIC"/>
    <property type="match status" value="1"/>
</dbReference>
<dbReference type="PANTHER" id="PTHR43512">
    <property type="entry name" value="TRANSLATION FACTOR GUF1-RELATED"/>
    <property type="match status" value="1"/>
</dbReference>
<dbReference type="Pfam" id="PF00679">
    <property type="entry name" value="EFG_C"/>
    <property type="match status" value="1"/>
</dbReference>
<dbReference type="Pfam" id="PF00009">
    <property type="entry name" value="GTP_EFTU"/>
    <property type="match status" value="1"/>
</dbReference>
<dbReference type="Pfam" id="PF03144">
    <property type="entry name" value="GTP_EFTU_D2"/>
    <property type="match status" value="1"/>
</dbReference>
<dbReference type="Pfam" id="PF06421">
    <property type="entry name" value="LepA_C"/>
    <property type="match status" value="1"/>
</dbReference>
<dbReference type="PRINTS" id="PR00315">
    <property type="entry name" value="ELONGATNFCT"/>
</dbReference>
<dbReference type="SMART" id="SM00838">
    <property type="entry name" value="EFG_C"/>
    <property type="match status" value="1"/>
</dbReference>
<dbReference type="SUPFAM" id="SSF54980">
    <property type="entry name" value="EF-G C-terminal domain-like"/>
    <property type="match status" value="2"/>
</dbReference>
<dbReference type="SUPFAM" id="SSF52540">
    <property type="entry name" value="P-loop containing nucleoside triphosphate hydrolases"/>
    <property type="match status" value="1"/>
</dbReference>
<dbReference type="PROSITE" id="PS00301">
    <property type="entry name" value="G_TR_1"/>
    <property type="match status" value="1"/>
</dbReference>
<dbReference type="PROSITE" id="PS51722">
    <property type="entry name" value="G_TR_2"/>
    <property type="match status" value="1"/>
</dbReference>
<keyword id="KW-0997">Cell inner membrane</keyword>
<keyword id="KW-1003">Cell membrane</keyword>
<keyword id="KW-0342">GTP-binding</keyword>
<keyword id="KW-0378">Hydrolase</keyword>
<keyword id="KW-0472">Membrane</keyword>
<keyword id="KW-0547">Nucleotide-binding</keyword>
<keyword id="KW-0648">Protein biosynthesis</keyword>
<keyword id="KW-1185">Reference proteome</keyword>
<organism>
    <name type="scientific">Shewanella denitrificans (strain OS217 / ATCC BAA-1090 / DSM 15013)</name>
    <dbReference type="NCBI Taxonomy" id="318161"/>
    <lineage>
        <taxon>Bacteria</taxon>
        <taxon>Pseudomonadati</taxon>
        <taxon>Pseudomonadota</taxon>
        <taxon>Gammaproteobacteria</taxon>
        <taxon>Alteromonadales</taxon>
        <taxon>Shewanellaceae</taxon>
        <taxon>Shewanella</taxon>
    </lineage>
</organism>
<comment type="function">
    <text evidence="1">Required for accurate and efficient protein synthesis under certain stress conditions. May act as a fidelity factor of the translation reaction, by catalyzing a one-codon backward translocation of tRNAs on improperly translocated ribosomes. Back-translocation proceeds from a post-translocation (POST) complex to a pre-translocation (PRE) complex, thus giving elongation factor G a second chance to translocate the tRNAs correctly. Binds to ribosomes in a GTP-dependent manner.</text>
</comment>
<comment type="catalytic activity">
    <reaction evidence="1">
        <text>GTP + H2O = GDP + phosphate + H(+)</text>
        <dbReference type="Rhea" id="RHEA:19669"/>
        <dbReference type="ChEBI" id="CHEBI:15377"/>
        <dbReference type="ChEBI" id="CHEBI:15378"/>
        <dbReference type="ChEBI" id="CHEBI:37565"/>
        <dbReference type="ChEBI" id="CHEBI:43474"/>
        <dbReference type="ChEBI" id="CHEBI:58189"/>
        <dbReference type="EC" id="3.6.5.n1"/>
    </reaction>
</comment>
<comment type="subcellular location">
    <subcellularLocation>
        <location evidence="1">Cell inner membrane</location>
        <topology evidence="1">Peripheral membrane protein</topology>
        <orientation evidence="1">Cytoplasmic side</orientation>
    </subcellularLocation>
</comment>
<comment type="similarity">
    <text evidence="1">Belongs to the TRAFAC class translation factor GTPase superfamily. Classic translation factor GTPase family. LepA subfamily.</text>
</comment>
<evidence type="ECO:0000255" key="1">
    <source>
        <dbReference type="HAMAP-Rule" id="MF_00071"/>
    </source>
</evidence>
<proteinExistence type="inferred from homology"/>